<accession>B7MV10</accession>
<evidence type="ECO:0000255" key="1">
    <source>
        <dbReference type="HAMAP-Rule" id="MF_00463"/>
    </source>
</evidence>
<protein>
    <recommendedName>
        <fullName evidence="1">Ion-translocating oxidoreductase complex subunit B</fullName>
        <ecNumber evidence="1">7.-.-.-</ecNumber>
    </recommendedName>
    <alternativeName>
        <fullName evidence="1">Rsx electron transport complex subunit B</fullName>
    </alternativeName>
</protein>
<gene>
    <name evidence="1" type="primary">rsxB</name>
    <name type="ordered locus">ECED1_1829</name>
</gene>
<comment type="function">
    <text evidence="1">Part of a membrane-bound complex that couples electron transfer with translocation of ions across the membrane. Required to maintain the reduced state of SoxR.</text>
</comment>
<comment type="cofactor">
    <cofactor evidence="1">
        <name>[4Fe-4S] cluster</name>
        <dbReference type="ChEBI" id="CHEBI:49883"/>
    </cofactor>
    <text evidence="1">Binds 3 [4Fe-4S] clusters.</text>
</comment>
<comment type="subunit">
    <text evidence="1">The complex is composed of six subunits: RsxA, RsxB, RsxC, RsxD, RsxE and RsxG.</text>
</comment>
<comment type="subcellular location">
    <subcellularLocation>
        <location evidence="1">Cell inner membrane</location>
    </subcellularLocation>
</comment>
<comment type="similarity">
    <text evidence="1">Belongs to the 4Fe4S bacterial-type ferredoxin family. RnfB subfamily.</text>
</comment>
<feature type="chain" id="PRO_1000194484" description="Ion-translocating oxidoreductase complex subunit B">
    <location>
        <begin position="1"/>
        <end position="192"/>
    </location>
</feature>
<feature type="domain" description="4Fe-4S" evidence="1">
    <location>
        <begin position="32"/>
        <end position="91"/>
    </location>
</feature>
<feature type="domain" description="4Fe-4S ferredoxin-type 1" evidence="1">
    <location>
        <begin position="108"/>
        <end position="137"/>
    </location>
</feature>
<feature type="domain" description="4Fe-4S ferredoxin-type 2" evidence="1">
    <location>
        <begin position="138"/>
        <end position="167"/>
    </location>
</feature>
<feature type="region of interest" description="Hydrophobic" evidence="1">
    <location>
        <begin position="1"/>
        <end position="26"/>
    </location>
</feature>
<feature type="binding site" evidence="1">
    <location>
        <position position="49"/>
    </location>
    <ligand>
        <name>[4Fe-4S] cluster</name>
        <dbReference type="ChEBI" id="CHEBI:49883"/>
        <label>1</label>
    </ligand>
</feature>
<feature type="binding site" evidence="1">
    <location>
        <position position="52"/>
    </location>
    <ligand>
        <name>[4Fe-4S] cluster</name>
        <dbReference type="ChEBI" id="CHEBI:49883"/>
        <label>1</label>
    </ligand>
</feature>
<feature type="binding site" evidence="1">
    <location>
        <position position="57"/>
    </location>
    <ligand>
        <name>[4Fe-4S] cluster</name>
        <dbReference type="ChEBI" id="CHEBI:49883"/>
        <label>1</label>
    </ligand>
</feature>
<feature type="binding site" evidence="1">
    <location>
        <position position="74"/>
    </location>
    <ligand>
        <name>[4Fe-4S] cluster</name>
        <dbReference type="ChEBI" id="CHEBI:49883"/>
        <label>1</label>
    </ligand>
</feature>
<feature type="binding site" evidence="1">
    <location>
        <position position="117"/>
    </location>
    <ligand>
        <name>[4Fe-4S] cluster</name>
        <dbReference type="ChEBI" id="CHEBI:49883"/>
        <label>2</label>
    </ligand>
</feature>
<feature type="binding site" evidence="1">
    <location>
        <position position="120"/>
    </location>
    <ligand>
        <name>[4Fe-4S] cluster</name>
        <dbReference type="ChEBI" id="CHEBI:49883"/>
        <label>2</label>
    </ligand>
</feature>
<feature type="binding site" evidence="1">
    <location>
        <position position="123"/>
    </location>
    <ligand>
        <name>[4Fe-4S] cluster</name>
        <dbReference type="ChEBI" id="CHEBI:49883"/>
        <label>2</label>
    </ligand>
</feature>
<feature type="binding site" evidence="1">
    <location>
        <position position="127"/>
    </location>
    <ligand>
        <name>[4Fe-4S] cluster</name>
        <dbReference type="ChEBI" id="CHEBI:49883"/>
        <label>3</label>
    </ligand>
</feature>
<feature type="binding site" evidence="1">
    <location>
        <position position="147"/>
    </location>
    <ligand>
        <name>[4Fe-4S] cluster</name>
        <dbReference type="ChEBI" id="CHEBI:49883"/>
        <label>3</label>
    </ligand>
</feature>
<feature type="binding site" evidence="1">
    <location>
        <position position="150"/>
    </location>
    <ligand>
        <name>[4Fe-4S] cluster</name>
        <dbReference type="ChEBI" id="CHEBI:49883"/>
        <label>3</label>
    </ligand>
</feature>
<feature type="binding site" evidence="1">
    <location>
        <position position="153"/>
    </location>
    <ligand>
        <name>[4Fe-4S] cluster</name>
        <dbReference type="ChEBI" id="CHEBI:49883"/>
        <label>3</label>
    </ligand>
</feature>
<feature type="binding site" evidence="1">
    <location>
        <position position="157"/>
    </location>
    <ligand>
        <name>[4Fe-4S] cluster</name>
        <dbReference type="ChEBI" id="CHEBI:49883"/>
        <label>2</label>
    </ligand>
</feature>
<organism>
    <name type="scientific">Escherichia coli O81 (strain ED1a)</name>
    <dbReference type="NCBI Taxonomy" id="585397"/>
    <lineage>
        <taxon>Bacteria</taxon>
        <taxon>Pseudomonadati</taxon>
        <taxon>Pseudomonadota</taxon>
        <taxon>Gammaproteobacteria</taxon>
        <taxon>Enterobacterales</taxon>
        <taxon>Enterobacteriaceae</taxon>
        <taxon>Escherichia</taxon>
    </lineage>
</organism>
<sequence length="192" mass="20558">MNAIWIAVAAVSLLALAFGAILGYASRRFAVEDDPVVEKIDEILPQSQCGQCGYPGCRPYAEAISCNGEKINRCAPGGEAVMLKIAELLNVEPQPLDGEAQELTPARMVAVIDENNCIGCTKCIQACPVDAIVGATRAMHTVMSDLCTGCNLCVDPCPTHCISLQPVAETPDSWKWDLNTIPVRIIPVEHHA</sequence>
<reference key="1">
    <citation type="journal article" date="2009" name="PLoS Genet.">
        <title>Organised genome dynamics in the Escherichia coli species results in highly diverse adaptive paths.</title>
        <authorList>
            <person name="Touchon M."/>
            <person name="Hoede C."/>
            <person name="Tenaillon O."/>
            <person name="Barbe V."/>
            <person name="Baeriswyl S."/>
            <person name="Bidet P."/>
            <person name="Bingen E."/>
            <person name="Bonacorsi S."/>
            <person name="Bouchier C."/>
            <person name="Bouvet O."/>
            <person name="Calteau A."/>
            <person name="Chiapello H."/>
            <person name="Clermont O."/>
            <person name="Cruveiller S."/>
            <person name="Danchin A."/>
            <person name="Diard M."/>
            <person name="Dossat C."/>
            <person name="Karoui M.E."/>
            <person name="Frapy E."/>
            <person name="Garry L."/>
            <person name="Ghigo J.M."/>
            <person name="Gilles A.M."/>
            <person name="Johnson J."/>
            <person name="Le Bouguenec C."/>
            <person name="Lescat M."/>
            <person name="Mangenot S."/>
            <person name="Martinez-Jehanne V."/>
            <person name="Matic I."/>
            <person name="Nassif X."/>
            <person name="Oztas S."/>
            <person name="Petit M.A."/>
            <person name="Pichon C."/>
            <person name="Rouy Z."/>
            <person name="Ruf C.S."/>
            <person name="Schneider D."/>
            <person name="Tourret J."/>
            <person name="Vacherie B."/>
            <person name="Vallenet D."/>
            <person name="Medigue C."/>
            <person name="Rocha E.P.C."/>
            <person name="Denamur E."/>
        </authorList>
    </citation>
    <scope>NUCLEOTIDE SEQUENCE [LARGE SCALE GENOMIC DNA]</scope>
    <source>
        <strain>ED1a</strain>
    </source>
</reference>
<name>RSXB_ECO81</name>
<dbReference type="EC" id="7.-.-.-" evidence="1"/>
<dbReference type="EMBL" id="CU928162">
    <property type="protein sequence ID" value="CAR07926.1"/>
    <property type="molecule type" value="Genomic_DNA"/>
</dbReference>
<dbReference type="RefSeq" id="WP_000991797.1">
    <property type="nucleotide sequence ID" value="NC_011745.1"/>
</dbReference>
<dbReference type="KEGG" id="ecq:ECED1_1829"/>
<dbReference type="HOGENOM" id="CLU_063448_2_0_6"/>
<dbReference type="Proteomes" id="UP000000748">
    <property type="component" value="Chromosome"/>
</dbReference>
<dbReference type="GO" id="GO:0005886">
    <property type="term" value="C:plasma membrane"/>
    <property type="evidence" value="ECO:0007669"/>
    <property type="project" value="UniProtKB-SubCell"/>
</dbReference>
<dbReference type="GO" id="GO:0051539">
    <property type="term" value="F:4 iron, 4 sulfur cluster binding"/>
    <property type="evidence" value="ECO:0007669"/>
    <property type="project" value="UniProtKB-UniRule"/>
</dbReference>
<dbReference type="GO" id="GO:0009055">
    <property type="term" value="F:electron transfer activity"/>
    <property type="evidence" value="ECO:0007669"/>
    <property type="project" value="InterPro"/>
</dbReference>
<dbReference type="GO" id="GO:0046872">
    <property type="term" value="F:metal ion binding"/>
    <property type="evidence" value="ECO:0007669"/>
    <property type="project" value="UniProtKB-KW"/>
</dbReference>
<dbReference type="GO" id="GO:0022900">
    <property type="term" value="P:electron transport chain"/>
    <property type="evidence" value="ECO:0007669"/>
    <property type="project" value="UniProtKB-UniRule"/>
</dbReference>
<dbReference type="FunFam" id="1.10.15.40:FF:000001">
    <property type="entry name" value="Ion-translocating oxidoreductase complex subunit B"/>
    <property type="match status" value="1"/>
</dbReference>
<dbReference type="Gene3D" id="3.30.70.20">
    <property type="match status" value="1"/>
</dbReference>
<dbReference type="Gene3D" id="1.10.15.40">
    <property type="entry name" value="Electron transport complex subunit B, putative Fe-S cluster"/>
    <property type="match status" value="1"/>
</dbReference>
<dbReference type="HAMAP" id="MF_00463">
    <property type="entry name" value="RsxB_RnfB"/>
    <property type="match status" value="1"/>
</dbReference>
<dbReference type="InterPro" id="IPR007202">
    <property type="entry name" value="4Fe-4S_dom"/>
</dbReference>
<dbReference type="InterPro" id="IPR017896">
    <property type="entry name" value="4Fe4S_Fe-S-bd"/>
</dbReference>
<dbReference type="InterPro" id="IPR017900">
    <property type="entry name" value="4Fe4S_Fe_S_CS"/>
</dbReference>
<dbReference type="InterPro" id="IPR050395">
    <property type="entry name" value="4Fe4S_Ferredoxin_RnfB"/>
</dbReference>
<dbReference type="InterPro" id="IPR010207">
    <property type="entry name" value="Elect_transpt_cplx_RnfB/RsxB"/>
</dbReference>
<dbReference type="InterPro" id="IPR016463">
    <property type="entry name" value="RnfB/RsxB_Proteobac"/>
</dbReference>
<dbReference type="NCBIfam" id="NF003475">
    <property type="entry name" value="PRK05113.1"/>
    <property type="match status" value="1"/>
</dbReference>
<dbReference type="NCBIfam" id="TIGR01944">
    <property type="entry name" value="rnfB"/>
    <property type="match status" value="1"/>
</dbReference>
<dbReference type="PANTHER" id="PTHR43560">
    <property type="entry name" value="ION-TRANSLOCATING OXIDOREDUCTASE COMPLEX SUBUNIT B"/>
    <property type="match status" value="1"/>
</dbReference>
<dbReference type="PANTHER" id="PTHR43560:SF1">
    <property type="entry name" value="ION-TRANSLOCATING OXIDOREDUCTASE COMPLEX SUBUNIT B"/>
    <property type="match status" value="1"/>
</dbReference>
<dbReference type="Pfam" id="PF14697">
    <property type="entry name" value="Fer4_21"/>
    <property type="match status" value="1"/>
</dbReference>
<dbReference type="Pfam" id="PF04060">
    <property type="entry name" value="FeS"/>
    <property type="match status" value="1"/>
</dbReference>
<dbReference type="PIRSF" id="PIRSF005784">
    <property type="entry name" value="Elect_transpt_RnfB"/>
    <property type="match status" value="1"/>
</dbReference>
<dbReference type="SUPFAM" id="SSF54862">
    <property type="entry name" value="4Fe-4S ferredoxins"/>
    <property type="match status" value="1"/>
</dbReference>
<dbReference type="PROSITE" id="PS51656">
    <property type="entry name" value="4FE4S"/>
    <property type="match status" value="1"/>
</dbReference>
<dbReference type="PROSITE" id="PS00198">
    <property type="entry name" value="4FE4S_FER_1"/>
    <property type="match status" value="2"/>
</dbReference>
<dbReference type="PROSITE" id="PS51379">
    <property type="entry name" value="4FE4S_FER_2"/>
    <property type="match status" value="2"/>
</dbReference>
<proteinExistence type="inferred from homology"/>
<keyword id="KW-0004">4Fe-4S</keyword>
<keyword id="KW-0997">Cell inner membrane</keyword>
<keyword id="KW-1003">Cell membrane</keyword>
<keyword id="KW-0249">Electron transport</keyword>
<keyword id="KW-0408">Iron</keyword>
<keyword id="KW-0411">Iron-sulfur</keyword>
<keyword id="KW-0472">Membrane</keyword>
<keyword id="KW-0479">Metal-binding</keyword>
<keyword id="KW-0677">Repeat</keyword>
<keyword id="KW-1278">Translocase</keyword>
<keyword id="KW-0813">Transport</keyword>